<proteinExistence type="inferred from homology"/>
<comment type="function">
    <text evidence="1">Component of the eukaryotic translation initiation factor 3 (eIF-3) complex, which is involved in protein synthesis of a specialized repertoire of mRNAs and, together with other initiation factors, stimulates binding of mRNA and methionyl-tRNAi to the 40S ribosome. The eIF-3 complex specifically targets and initiates translation of a subset of mRNAs involved in cell proliferation.</text>
</comment>
<comment type="subunit">
    <text evidence="1">Component of the eukaryotic translation initiation factor 3 (eIF-3) complex. The eIF-3 complex interacts with pix.</text>
</comment>
<comment type="subcellular location">
    <subcellularLocation>
        <location evidence="1">Cytoplasm</location>
    </subcellularLocation>
</comment>
<comment type="similarity">
    <text evidence="1">Belongs to the eIF-3 subunit J family.</text>
</comment>
<protein>
    <recommendedName>
        <fullName evidence="1">Eukaryotic translation initiation factor 3 subunit J</fullName>
        <shortName evidence="1">eIF3j</shortName>
    </recommendedName>
</protein>
<evidence type="ECO:0000255" key="1">
    <source>
        <dbReference type="HAMAP-Rule" id="MF_03009"/>
    </source>
</evidence>
<evidence type="ECO:0000256" key="2">
    <source>
        <dbReference type="SAM" id="MobiDB-lite"/>
    </source>
</evidence>
<name>EIF3J_DROPS</name>
<keyword id="KW-0963">Cytoplasm</keyword>
<keyword id="KW-0396">Initiation factor</keyword>
<keyword id="KW-0648">Protein biosynthesis</keyword>
<keyword id="KW-1185">Reference proteome</keyword>
<feature type="chain" id="PRO_0000365138" description="Eukaryotic translation initiation factor 3 subunit J">
    <location>
        <begin position="1"/>
        <end position="240"/>
    </location>
</feature>
<feature type="region of interest" description="Disordered" evidence="2">
    <location>
        <begin position="1"/>
        <end position="66"/>
    </location>
</feature>
<feature type="compositionally biased region" description="Acidic residues" evidence="2">
    <location>
        <begin position="27"/>
        <end position="45"/>
    </location>
</feature>
<gene>
    <name evidence="1" type="primary">eIF3j</name>
    <name evidence="1" type="synonym">Adam</name>
    <name type="ORF">GA11426</name>
</gene>
<sequence length="240" mass="27272">MADDWESAADSEIILQNAASTVNKWEGEDDDDDVKESWEDEEEKKDEENEKPTITDVPVKTKPSKALKAKLEEQARLEEEKEAKRLASLTPEEKLAEKLRLQKIQEDSDLNHALDTFGVTRAETNGNGLDSFNPETKEQFKEFGSALSWKVGQYRESAEFPQFVEDLVRGLCIHLSAADIKKVKMSVEILHSEKLKMEKAIAKKAAGKNKGKATLRTESDDIDDYKKYGNDFSEDYDDFM</sequence>
<reference key="1">
    <citation type="journal article" date="2002" name="Genome Biol.">
        <title>Assessing the impact of comparative genomic sequence data on the functional annotation of the Drosophila genome.</title>
        <authorList>
            <person name="Bergman C.M."/>
            <person name="Pfeiffer B.D."/>
            <person name="Rincon-Limas D.E."/>
            <person name="Hoskins R.A."/>
            <person name="Gnirke A."/>
            <person name="Mungall C.J."/>
            <person name="Wang A.M."/>
            <person name="Kronmiller B."/>
            <person name="Pacleb J.M."/>
            <person name="Park S."/>
            <person name="Stapleton M."/>
            <person name="Wan K.H."/>
            <person name="George R.A."/>
            <person name="de Jong P.J."/>
            <person name="Botas J."/>
            <person name="Rubin G.M."/>
            <person name="Celniker S.E."/>
        </authorList>
    </citation>
    <scope>NUCLEOTIDE SEQUENCE [GENOMIC DNA]</scope>
</reference>
<reference key="2">
    <citation type="journal article" date="2005" name="Genome Res.">
        <title>Comparative genome sequencing of Drosophila pseudoobscura: chromosomal, gene, and cis-element evolution.</title>
        <authorList>
            <person name="Richards S."/>
            <person name="Liu Y."/>
            <person name="Bettencourt B.R."/>
            <person name="Hradecky P."/>
            <person name="Letovsky S."/>
            <person name="Nielsen R."/>
            <person name="Thornton K."/>
            <person name="Hubisz M.J."/>
            <person name="Chen R."/>
            <person name="Meisel R.P."/>
            <person name="Couronne O."/>
            <person name="Hua S."/>
            <person name="Smith M.A."/>
            <person name="Zhang P."/>
            <person name="Liu J."/>
            <person name="Bussemaker H.J."/>
            <person name="van Batenburg M.F."/>
            <person name="Howells S.L."/>
            <person name="Scherer S.E."/>
            <person name="Sodergren E."/>
            <person name="Matthews B.B."/>
            <person name="Crosby M.A."/>
            <person name="Schroeder A.J."/>
            <person name="Ortiz-Barrientos D."/>
            <person name="Rives C.M."/>
            <person name="Metzker M.L."/>
            <person name="Muzny D.M."/>
            <person name="Scott G."/>
            <person name="Steffen D."/>
            <person name="Wheeler D.A."/>
            <person name="Worley K.C."/>
            <person name="Havlak P."/>
            <person name="Durbin K.J."/>
            <person name="Egan A."/>
            <person name="Gill R."/>
            <person name="Hume J."/>
            <person name="Morgan M.B."/>
            <person name="Miner G."/>
            <person name="Hamilton C."/>
            <person name="Huang Y."/>
            <person name="Waldron L."/>
            <person name="Verduzco D."/>
            <person name="Clerc-Blankenburg K.P."/>
            <person name="Dubchak I."/>
            <person name="Noor M.A.F."/>
            <person name="Anderson W."/>
            <person name="White K.P."/>
            <person name="Clark A.G."/>
            <person name="Schaeffer S.W."/>
            <person name="Gelbart W.M."/>
            <person name="Weinstock G.M."/>
            <person name="Gibbs R.A."/>
        </authorList>
    </citation>
    <scope>NUCLEOTIDE SEQUENCE [LARGE SCALE GENOMIC DNA]</scope>
    <source>
        <strain>MV2-25 / Tucson 14011-0121.94</strain>
    </source>
</reference>
<dbReference type="EMBL" id="AY190942">
    <property type="protein sequence ID" value="AAO01025.1"/>
    <property type="molecule type" value="Genomic_DNA"/>
</dbReference>
<dbReference type="EMBL" id="CM000071">
    <property type="protein sequence ID" value="EAL25807.2"/>
    <property type="molecule type" value="Genomic_DNA"/>
</dbReference>
<dbReference type="RefSeq" id="XP_001361229.2">
    <property type="nucleotide sequence ID" value="XM_001361192.3"/>
</dbReference>
<dbReference type="SMR" id="Q8I1E5"/>
<dbReference type="FunCoup" id="Q8I1E5">
    <property type="interactions" value="1664"/>
</dbReference>
<dbReference type="STRING" id="46245.Q8I1E5"/>
<dbReference type="EnsemblMetazoa" id="FBtr0277899">
    <property type="protein sequence ID" value="FBpp0276337"/>
    <property type="gene ID" value="FBgn0064448"/>
</dbReference>
<dbReference type="GeneID" id="4804711"/>
<dbReference type="KEGG" id="dpo:4804711"/>
<dbReference type="CTD" id="8669"/>
<dbReference type="eggNOG" id="KOG4813">
    <property type="taxonomic scope" value="Eukaryota"/>
</dbReference>
<dbReference type="HOGENOM" id="CLU_085806_2_0_1"/>
<dbReference type="InParanoid" id="Q8I1E5"/>
<dbReference type="OMA" id="KPHYALW"/>
<dbReference type="ChiTaRS" id="Adam">
    <property type="organism name" value="fly"/>
</dbReference>
<dbReference type="Proteomes" id="UP000001819">
    <property type="component" value="Chromosome 3"/>
</dbReference>
<dbReference type="Bgee" id="FBgn0064448">
    <property type="expression patterns" value="Expressed in female reproductive system and 2 other cell types or tissues"/>
</dbReference>
<dbReference type="GO" id="GO:0016282">
    <property type="term" value="C:eukaryotic 43S preinitiation complex"/>
    <property type="evidence" value="ECO:0007669"/>
    <property type="project" value="UniProtKB-UniRule"/>
</dbReference>
<dbReference type="GO" id="GO:0033290">
    <property type="term" value="C:eukaryotic 48S preinitiation complex"/>
    <property type="evidence" value="ECO:0007669"/>
    <property type="project" value="UniProtKB-UniRule"/>
</dbReference>
<dbReference type="GO" id="GO:0005852">
    <property type="term" value="C:eukaryotic translation initiation factor 3 complex"/>
    <property type="evidence" value="ECO:0007669"/>
    <property type="project" value="UniProtKB-UniRule"/>
</dbReference>
<dbReference type="GO" id="GO:0003743">
    <property type="term" value="F:translation initiation factor activity"/>
    <property type="evidence" value="ECO:0007669"/>
    <property type="project" value="UniProtKB-UniRule"/>
</dbReference>
<dbReference type="GO" id="GO:0001732">
    <property type="term" value="P:formation of cytoplasmic translation initiation complex"/>
    <property type="evidence" value="ECO:0007669"/>
    <property type="project" value="UniProtKB-UniRule"/>
</dbReference>
<dbReference type="Gene3D" id="1.10.246.60">
    <property type="entry name" value="Eukaryotic translation initiation factor 3 like domains"/>
    <property type="match status" value="1"/>
</dbReference>
<dbReference type="HAMAP" id="MF_03009">
    <property type="entry name" value="eIF3j"/>
    <property type="match status" value="1"/>
</dbReference>
<dbReference type="InterPro" id="IPR023194">
    <property type="entry name" value="eIF3-like_dom_sf"/>
</dbReference>
<dbReference type="InterPro" id="IPR013906">
    <property type="entry name" value="eIF3j"/>
</dbReference>
<dbReference type="PANTHER" id="PTHR21681">
    <property type="entry name" value="EUKARYOTIC TRANSLATION INITIATION FACTOR 3 SUBUNIT J"/>
    <property type="match status" value="1"/>
</dbReference>
<dbReference type="PANTHER" id="PTHR21681:SF0">
    <property type="entry name" value="EUKARYOTIC TRANSLATION INITIATION FACTOR 3 SUBUNIT J"/>
    <property type="match status" value="1"/>
</dbReference>
<dbReference type="Pfam" id="PF08597">
    <property type="entry name" value="eIF3_subunit"/>
    <property type="match status" value="1"/>
</dbReference>
<organism>
    <name type="scientific">Drosophila pseudoobscura pseudoobscura</name>
    <name type="common">Fruit fly</name>
    <dbReference type="NCBI Taxonomy" id="46245"/>
    <lineage>
        <taxon>Eukaryota</taxon>
        <taxon>Metazoa</taxon>
        <taxon>Ecdysozoa</taxon>
        <taxon>Arthropoda</taxon>
        <taxon>Hexapoda</taxon>
        <taxon>Insecta</taxon>
        <taxon>Pterygota</taxon>
        <taxon>Neoptera</taxon>
        <taxon>Endopterygota</taxon>
        <taxon>Diptera</taxon>
        <taxon>Brachycera</taxon>
        <taxon>Muscomorpha</taxon>
        <taxon>Ephydroidea</taxon>
        <taxon>Drosophilidae</taxon>
        <taxon>Drosophila</taxon>
        <taxon>Sophophora</taxon>
    </lineage>
</organism>
<accession>Q8I1E5</accession>
<accession>Q28Z08</accession>